<accession>Q569U0</accession>
<comment type="function">
    <text evidence="1 2">Actin-based motor molecule with ATPase activity that localizes to the mitochondrion outer membrane. Motor protein that moves towards the plus-end of actin filaments. Required for mitochondrial inheritance during mitosis. May be involved in mitochondrial transport or positioning.</text>
</comment>
<comment type="subunit">
    <text evidence="1">Myosin is a hexamer of 2 heavy chains and 4 light chains.</text>
</comment>
<comment type="subcellular location">
    <subcellularLocation>
        <location evidence="2">Mitochondrion outer membrane</location>
        <topology evidence="2">Peripheral membrane protein</topology>
    </subcellularLocation>
    <subcellularLocation>
        <location evidence="2">Cytoplasm</location>
        <location evidence="2">Cytoskeleton</location>
    </subcellularLocation>
</comment>
<comment type="domain">
    <text evidence="2">The MyMOMA (MYO19-specific mitochondrial outer membrane-association) region mediates association with the mitochondrion outer membrane via electrostatic interaction.</text>
</comment>
<comment type="similarity">
    <text evidence="6">Belongs to the TRAFAC class myosin-kinesin ATPase superfamily. Myosin family.</text>
</comment>
<gene>
    <name evidence="2" type="primary">myo19</name>
</gene>
<sequence length="971" mass="110621">MSRPLSKNTEREPKQINGHQNNLSNHKHLSKSLEQEMKAFLIDEKELHLYDDLTKVNPVTTATVLKCLQARYSAGVFYTNAGCTVVAVNPFQPVYKLYSSEVMKDYHSTSNPQGCKPHIFTVAEQAYRNVQSQIQPVNQSIIVSGESGAGKTWTSRCLMKFYATVSASRCYITNEMVERIEGRVLDSNPVMEAFGNACTLRNNNSSRFGKYIQLQLNRAQQITGASIQTYLLEKTRVAHQAPLERNFHIFYQMFKGASRLEREEWNLPEKANFSWLPNYENNLEEDDFEVTKKAMLHLGIDQPTQNNIFKILSGLLHLGNIKFSDSVDESQPCEPLNYTQEFASIAANLLKIPVSHLLERLSIRTITAGKQQVFKKPCRKSECDTRRDCLAKTIYARLFEWLVTVINENICAESCRWNNFIGLLDVYGFESFPENNLEQLCINYANEKLQQHFVSHYLKSQQDEYAAEGLEWSFISYQDNQSCVDLLEGSPISIFSLLNEECRLNRSLDAGQLQSRLENALSHNKCIGRDKFSKKPNFIVSHYAGKVQYQIEDMAEKNKDPVPPELIQLLQESDDHLLQKLFPVDNNKLVYGATNNRAVGVTVVSKFKGSLESLMQILHSTTPHYIRCIKPNVDCQALVFRQEEVLMQLEACGIVETINISAAGFPIRISFENFVERYSVIAPRQSHMKTCFPLKKKQGSIEKTDQLSSKLHTILQAVLPKQCKDSTLSNSLVHCGTTKVFLTHLMVELLEERRLIAISSKAMCIQCCWRSYRQRKLAKQSKAATTIQAAVKGWLTKKYIKRMHSAATVIKRIWKKWKEKMEALAAAELDDSTEDVESTLFSSMLASPVKSLESSKTNLPDKIMTQSAILRFGTLGLVLYGAPAIRKYIVETDELKRNQNILMCLNMLHRNNRYKVTVNREEPGITSIRARPQGSIRFHYKRSPLHFANICPGKINCGITGFNEILLEKTV</sequence>
<keyword id="KW-0009">Actin-binding</keyword>
<keyword id="KW-0067">ATP-binding</keyword>
<keyword id="KW-0963">Cytoplasm</keyword>
<keyword id="KW-0206">Cytoskeleton</keyword>
<keyword id="KW-0472">Membrane</keyword>
<keyword id="KW-0496">Mitochondrion</keyword>
<keyword id="KW-1000">Mitochondrion outer membrane</keyword>
<keyword id="KW-0505">Motor protein</keyword>
<keyword id="KW-0518">Myosin</keyword>
<keyword id="KW-0547">Nucleotide-binding</keyword>
<keyword id="KW-1185">Reference proteome</keyword>
<keyword id="KW-0677">Repeat</keyword>
<proteinExistence type="evidence at transcript level"/>
<protein>
    <recommendedName>
        <fullName evidence="2">Unconventional myosin-XIX</fullName>
    </recommendedName>
</protein>
<dbReference type="EMBL" id="BC092309">
    <property type="protein sequence ID" value="AAH92309.1"/>
    <property type="molecule type" value="mRNA"/>
</dbReference>
<dbReference type="RefSeq" id="NP_001089346.1">
    <property type="nucleotide sequence ID" value="NM_001095877.1"/>
</dbReference>
<dbReference type="SMR" id="Q569U0"/>
<dbReference type="DNASU" id="734396"/>
<dbReference type="GeneID" id="734396"/>
<dbReference type="KEGG" id="xla:734396"/>
<dbReference type="AGR" id="Xenbase:XB-GENE-999902"/>
<dbReference type="CTD" id="734396"/>
<dbReference type="Xenbase" id="XB-GENE-999902">
    <property type="gene designation" value="myo19.S"/>
</dbReference>
<dbReference type="OrthoDB" id="6108017at2759"/>
<dbReference type="Proteomes" id="UP000186698">
    <property type="component" value="Chromosome 2S"/>
</dbReference>
<dbReference type="Bgee" id="734396">
    <property type="expression patterns" value="Expressed in egg cell and 19 other cell types or tissues"/>
</dbReference>
<dbReference type="GO" id="GO:0015629">
    <property type="term" value="C:actin cytoskeleton"/>
    <property type="evidence" value="ECO:0000318"/>
    <property type="project" value="GO_Central"/>
</dbReference>
<dbReference type="GO" id="GO:0005737">
    <property type="term" value="C:cytoplasm"/>
    <property type="evidence" value="ECO:0000318"/>
    <property type="project" value="GO_Central"/>
</dbReference>
<dbReference type="GO" id="GO:0016020">
    <property type="term" value="C:membrane"/>
    <property type="evidence" value="ECO:0000318"/>
    <property type="project" value="GO_Central"/>
</dbReference>
<dbReference type="GO" id="GO:0005741">
    <property type="term" value="C:mitochondrial outer membrane"/>
    <property type="evidence" value="ECO:0000250"/>
    <property type="project" value="UniProtKB"/>
</dbReference>
<dbReference type="GO" id="GO:0005739">
    <property type="term" value="C:mitochondrion"/>
    <property type="evidence" value="ECO:0000250"/>
    <property type="project" value="UniProtKB"/>
</dbReference>
<dbReference type="GO" id="GO:0016459">
    <property type="term" value="C:myosin complex"/>
    <property type="evidence" value="ECO:0007669"/>
    <property type="project" value="UniProtKB-KW"/>
</dbReference>
<dbReference type="GO" id="GO:0003779">
    <property type="term" value="F:actin binding"/>
    <property type="evidence" value="ECO:0000250"/>
    <property type="project" value="UniProtKB"/>
</dbReference>
<dbReference type="GO" id="GO:0051015">
    <property type="term" value="F:actin filament binding"/>
    <property type="evidence" value="ECO:0000318"/>
    <property type="project" value="GO_Central"/>
</dbReference>
<dbReference type="GO" id="GO:0005524">
    <property type="term" value="F:ATP binding"/>
    <property type="evidence" value="ECO:0007669"/>
    <property type="project" value="UniProtKB-KW"/>
</dbReference>
<dbReference type="GO" id="GO:0016887">
    <property type="term" value="F:ATP hydrolysis activity"/>
    <property type="evidence" value="ECO:0000250"/>
    <property type="project" value="UniProtKB"/>
</dbReference>
<dbReference type="GO" id="GO:0000146">
    <property type="term" value="F:microfilament motor activity"/>
    <property type="evidence" value="ECO:0000318"/>
    <property type="project" value="GO_Central"/>
</dbReference>
<dbReference type="GO" id="GO:0007015">
    <property type="term" value="P:actin filament organization"/>
    <property type="evidence" value="ECO:0000318"/>
    <property type="project" value="GO_Central"/>
</dbReference>
<dbReference type="GO" id="GO:0032465">
    <property type="term" value="P:regulation of cytokinesis"/>
    <property type="evidence" value="ECO:0000250"/>
    <property type="project" value="UniProtKB"/>
</dbReference>
<dbReference type="GO" id="GO:0090140">
    <property type="term" value="P:regulation of mitochondrial fission"/>
    <property type="evidence" value="ECO:0000250"/>
    <property type="project" value="UniProtKB"/>
</dbReference>
<dbReference type="CDD" id="cd14880">
    <property type="entry name" value="MYSc_Myo19"/>
    <property type="match status" value="1"/>
</dbReference>
<dbReference type="FunFam" id="1.20.58.530:FF:000013">
    <property type="entry name" value="Unconventional myosin-XIX"/>
    <property type="match status" value="1"/>
</dbReference>
<dbReference type="Gene3D" id="1.10.10.820">
    <property type="match status" value="1"/>
</dbReference>
<dbReference type="Gene3D" id="1.20.5.190">
    <property type="match status" value="1"/>
</dbReference>
<dbReference type="Gene3D" id="1.20.5.4820">
    <property type="match status" value="1"/>
</dbReference>
<dbReference type="Gene3D" id="1.20.58.530">
    <property type="match status" value="1"/>
</dbReference>
<dbReference type="Gene3D" id="3.40.850.10">
    <property type="entry name" value="Kinesin motor domain"/>
    <property type="match status" value="1"/>
</dbReference>
<dbReference type="Gene3D" id="1.20.120.720">
    <property type="entry name" value="Myosin VI head, motor domain, U50 subdomain"/>
    <property type="match status" value="1"/>
</dbReference>
<dbReference type="InterPro" id="IPR000048">
    <property type="entry name" value="IQ_motif_EF-hand-BS"/>
</dbReference>
<dbReference type="InterPro" id="IPR036961">
    <property type="entry name" value="Kinesin_motor_dom_sf"/>
</dbReference>
<dbReference type="InterPro" id="IPR001609">
    <property type="entry name" value="Myosin_head_motor_dom-like"/>
</dbReference>
<dbReference type="InterPro" id="IPR036035">
    <property type="entry name" value="MYSc_Myo19"/>
</dbReference>
<dbReference type="InterPro" id="IPR027417">
    <property type="entry name" value="P-loop_NTPase"/>
</dbReference>
<dbReference type="PANTHER" id="PTHR13140">
    <property type="entry name" value="MYOSIN"/>
    <property type="match status" value="1"/>
</dbReference>
<dbReference type="PANTHER" id="PTHR13140:SF289">
    <property type="entry name" value="UNCONVENTIONAL MYOSIN-XIX"/>
    <property type="match status" value="1"/>
</dbReference>
<dbReference type="Pfam" id="PF00612">
    <property type="entry name" value="IQ"/>
    <property type="match status" value="2"/>
</dbReference>
<dbReference type="Pfam" id="PF00063">
    <property type="entry name" value="Myosin_head"/>
    <property type="match status" value="1"/>
</dbReference>
<dbReference type="PRINTS" id="PR00193">
    <property type="entry name" value="MYOSINHEAVY"/>
</dbReference>
<dbReference type="SMART" id="SM00015">
    <property type="entry name" value="IQ"/>
    <property type="match status" value="3"/>
</dbReference>
<dbReference type="SMART" id="SM00242">
    <property type="entry name" value="MYSc"/>
    <property type="match status" value="1"/>
</dbReference>
<dbReference type="SUPFAM" id="SSF52540">
    <property type="entry name" value="P-loop containing nucleoside triphosphate hydrolases"/>
    <property type="match status" value="1"/>
</dbReference>
<dbReference type="PROSITE" id="PS50096">
    <property type="entry name" value="IQ"/>
    <property type="match status" value="1"/>
</dbReference>
<dbReference type="PROSITE" id="PS51456">
    <property type="entry name" value="MYOSIN_MOTOR"/>
    <property type="match status" value="1"/>
</dbReference>
<reference key="1">
    <citation type="submission" date="2005-04" db="EMBL/GenBank/DDBJ databases">
        <authorList>
            <consortium name="NIH - Xenopus Gene Collection (XGC) project"/>
        </authorList>
    </citation>
    <scope>NUCLEOTIDE SEQUENCE [LARGE SCALE MRNA]</scope>
    <source>
        <tissue>Oocyte</tissue>
    </source>
</reference>
<evidence type="ECO:0000250" key="1">
    <source>
        <dbReference type="UniProtKB" id="Q5SV80"/>
    </source>
</evidence>
<evidence type="ECO:0000250" key="2">
    <source>
        <dbReference type="UniProtKB" id="Q96H55"/>
    </source>
</evidence>
<evidence type="ECO:0000255" key="3">
    <source>
        <dbReference type="PROSITE-ProRule" id="PRU00116"/>
    </source>
</evidence>
<evidence type="ECO:0000255" key="4">
    <source>
        <dbReference type="PROSITE-ProRule" id="PRU00782"/>
    </source>
</evidence>
<evidence type="ECO:0000256" key="5">
    <source>
        <dbReference type="SAM" id="MobiDB-lite"/>
    </source>
</evidence>
<evidence type="ECO:0000305" key="6"/>
<organism>
    <name type="scientific">Xenopus laevis</name>
    <name type="common">African clawed frog</name>
    <dbReference type="NCBI Taxonomy" id="8355"/>
    <lineage>
        <taxon>Eukaryota</taxon>
        <taxon>Metazoa</taxon>
        <taxon>Chordata</taxon>
        <taxon>Craniata</taxon>
        <taxon>Vertebrata</taxon>
        <taxon>Euteleostomi</taxon>
        <taxon>Amphibia</taxon>
        <taxon>Batrachia</taxon>
        <taxon>Anura</taxon>
        <taxon>Pipoidea</taxon>
        <taxon>Pipidae</taxon>
        <taxon>Xenopodinae</taxon>
        <taxon>Xenopus</taxon>
        <taxon>Xenopus</taxon>
    </lineage>
</organism>
<feature type="chain" id="PRO_0000332971" description="Unconventional myosin-XIX">
    <location>
        <begin position="1"/>
        <end position="971"/>
    </location>
</feature>
<feature type="domain" description="Myosin motor" evidence="4">
    <location>
        <begin position="48"/>
        <end position="755"/>
    </location>
</feature>
<feature type="domain" description="IQ 1" evidence="3">
    <location>
        <begin position="758"/>
        <end position="787"/>
    </location>
</feature>
<feature type="domain" description="IQ 2" evidence="3">
    <location>
        <begin position="780"/>
        <end position="809"/>
    </location>
</feature>
<feature type="region of interest" description="Disordered" evidence="5">
    <location>
        <begin position="1"/>
        <end position="25"/>
    </location>
</feature>
<feature type="region of interest" description="Actin-binding" evidence="4">
    <location>
        <begin position="611"/>
        <end position="633"/>
    </location>
</feature>
<feature type="region of interest" description="MyMOMA region" evidence="2">
    <location>
        <begin position="826"/>
        <end position="971"/>
    </location>
</feature>
<feature type="binding site" evidence="4">
    <location>
        <begin position="145"/>
        <end position="152"/>
    </location>
    <ligand>
        <name>ATP</name>
        <dbReference type="ChEBI" id="CHEBI:30616"/>
    </ligand>
</feature>
<name>MYO19_XENLA</name>